<accession>Q9HW04</accession>
<feature type="chain" id="PRO_0000002213" description="Arginine biosynthesis bifunctional protein ArgJ alpha chain" evidence="1">
    <location>
        <begin position="1"/>
        <end position="188"/>
    </location>
</feature>
<feature type="chain" id="PRO_0000002214" description="Arginine biosynthesis bifunctional protein ArgJ beta chain" evidence="1">
    <location>
        <begin position="189"/>
        <end position="405"/>
    </location>
</feature>
<feature type="active site" description="Nucleophile" evidence="1">
    <location>
        <position position="189"/>
    </location>
</feature>
<feature type="binding site" evidence="1">
    <location>
        <position position="152"/>
    </location>
    <ligand>
        <name>substrate</name>
    </ligand>
</feature>
<feature type="binding site" evidence="1">
    <location>
        <position position="178"/>
    </location>
    <ligand>
        <name>substrate</name>
    </ligand>
</feature>
<feature type="binding site" evidence="1">
    <location>
        <position position="189"/>
    </location>
    <ligand>
        <name>substrate</name>
    </ligand>
</feature>
<feature type="binding site" evidence="1">
    <location>
        <position position="276"/>
    </location>
    <ligand>
        <name>substrate</name>
    </ligand>
</feature>
<feature type="binding site" evidence="1">
    <location>
        <position position="400"/>
    </location>
    <ligand>
        <name>substrate</name>
    </ligand>
</feature>
<feature type="binding site" evidence="1">
    <location>
        <position position="405"/>
    </location>
    <ligand>
        <name>substrate</name>
    </ligand>
</feature>
<feature type="site" description="Involved in the stabilization of negative charge on the oxyanion by the formation of the oxyanion hole" evidence="1">
    <location>
        <position position="115"/>
    </location>
</feature>
<feature type="site" description="Involved in the stabilization of negative charge on the oxyanion by the formation of the oxyanion hole" evidence="1">
    <location>
        <position position="116"/>
    </location>
</feature>
<feature type="site" description="Cleavage; by autolysis" evidence="1">
    <location>
        <begin position="188"/>
        <end position="189"/>
    </location>
</feature>
<organism>
    <name type="scientific">Pseudomonas aeruginosa (strain ATCC 15692 / DSM 22644 / CIP 104116 / JCM 14847 / LMG 12228 / 1C / PRS 101 / PAO1)</name>
    <dbReference type="NCBI Taxonomy" id="208964"/>
    <lineage>
        <taxon>Bacteria</taxon>
        <taxon>Pseudomonadati</taxon>
        <taxon>Pseudomonadota</taxon>
        <taxon>Gammaproteobacteria</taxon>
        <taxon>Pseudomonadales</taxon>
        <taxon>Pseudomonadaceae</taxon>
        <taxon>Pseudomonas</taxon>
    </lineage>
</organism>
<evidence type="ECO:0000255" key="1">
    <source>
        <dbReference type="HAMAP-Rule" id="MF_01106"/>
    </source>
</evidence>
<proteinExistence type="inferred from homology"/>
<dbReference type="EC" id="2.3.1.35" evidence="1"/>
<dbReference type="EC" id="2.3.1.1" evidence="1"/>
<dbReference type="EMBL" id="AE004091">
    <property type="protein sequence ID" value="AAG07790.1"/>
    <property type="molecule type" value="Genomic_DNA"/>
</dbReference>
<dbReference type="PIR" id="C83093">
    <property type="entry name" value="C83093"/>
</dbReference>
<dbReference type="RefSeq" id="NP_253092.1">
    <property type="nucleotide sequence ID" value="NC_002516.2"/>
</dbReference>
<dbReference type="RefSeq" id="WP_003110156.1">
    <property type="nucleotide sequence ID" value="NZ_QZGE01000004.1"/>
</dbReference>
<dbReference type="SMR" id="Q9HW04"/>
<dbReference type="STRING" id="208964.PA4402"/>
<dbReference type="MEROPS" id="T05.001"/>
<dbReference type="PaxDb" id="208964-PA4402"/>
<dbReference type="GeneID" id="881305"/>
<dbReference type="KEGG" id="pae:PA4402"/>
<dbReference type="PATRIC" id="fig|208964.12.peg.4610"/>
<dbReference type="PseudoCAP" id="PA4402"/>
<dbReference type="HOGENOM" id="CLU_027172_1_0_6"/>
<dbReference type="InParanoid" id="Q9HW04"/>
<dbReference type="OrthoDB" id="9804242at2"/>
<dbReference type="PhylomeDB" id="Q9HW04"/>
<dbReference type="BioCyc" id="PAER208964:G1FZ6-4488-MONOMER"/>
<dbReference type="UniPathway" id="UPA00068">
    <property type="reaction ID" value="UER00106"/>
</dbReference>
<dbReference type="UniPathway" id="UPA00068">
    <property type="reaction ID" value="UER00111"/>
</dbReference>
<dbReference type="Proteomes" id="UP000002438">
    <property type="component" value="Chromosome"/>
</dbReference>
<dbReference type="GO" id="GO:0005737">
    <property type="term" value="C:cytoplasm"/>
    <property type="evidence" value="ECO:0007669"/>
    <property type="project" value="UniProtKB-SubCell"/>
</dbReference>
<dbReference type="GO" id="GO:0004358">
    <property type="term" value="F:glutamate N-acetyltransferase activity"/>
    <property type="evidence" value="ECO:0007669"/>
    <property type="project" value="UniProtKB-UniRule"/>
</dbReference>
<dbReference type="GO" id="GO:0004042">
    <property type="term" value="F:L-glutamate N-acetyltransferase activity"/>
    <property type="evidence" value="ECO:0000318"/>
    <property type="project" value="GO_Central"/>
</dbReference>
<dbReference type="GO" id="GO:0006526">
    <property type="term" value="P:L-arginine biosynthetic process"/>
    <property type="evidence" value="ECO:0007669"/>
    <property type="project" value="UniProtKB-UniRule"/>
</dbReference>
<dbReference type="GO" id="GO:0006592">
    <property type="term" value="P:ornithine biosynthetic process"/>
    <property type="evidence" value="ECO:0000318"/>
    <property type="project" value="GO_Central"/>
</dbReference>
<dbReference type="CDD" id="cd02152">
    <property type="entry name" value="OAT"/>
    <property type="match status" value="1"/>
</dbReference>
<dbReference type="FunFam" id="3.10.20.340:FF:000001">
    <property type="entry name" value="Arginine biosynthesis bifunctional protein ArgJ, chloroplastic"/>
    <property type="match status" value="1"/>
</dbReference>
<dbReference type="FunFam" id="3.60.70.12:FF:000001">
    <property type="entry name" value="Arginine biosynthesis bifunctional protein ArgJ, chloroplastic"/>
    <property type="match status" value="1"/>
</dbReference>
<dbReference type="Gene3D" id="3.10.20.340">
    <property type="entry name" value="ArgJ beta chain, C-terminal domain"/>
    <property type="match status" value="1"/>
</dbReference>
<dbReference type="Gene3D" id="3.60.70.12">
    <property type="entry name" value="L-amino peptidase D-ALA esterase/amidase"/>
    <property type="match status" value="1"/>
</dbReference>
<dbReference type="HAMAP" id="MF_01106">
    <property type="entry name" value="ArgJ"/>
    <property type="match status" value="1"/>
</dbReference>
<dbReference type="InterPro" id="IPR002813">
    <property type="entry name" value="Arg_biosynth_ArgJ"/>
</dbReference>
<dbReference type="InterPro" id="IPR016117">
    <property type="entry name" value="ArgJ-like_dom_sf"/>
</dbReference>
<dbReference type="InterPro" id="IPR042195">
    <property type="entry name" value="ArgJ_beta_C"/>
</dbReference>
<dbReference type="NCBIfam" id="TIGR00120">
    <property type="entry name" value="ArgJ"/>
    <property type="match status" value="1"/>
</dbReference>
<dbReference type="NCBIfam" id="NF003802">
    <property type="entry name" value="PRK05388.1"/>
    <property type="match status" value="1"/>
</dbReference>
<dbReference type="PANTHER" id="PTHR23100">
    <property type="entry name" value="ARGININE BIOSYNTHESIS BIFUNCTIONAL PROTEIN ARGJ"/>
    <property type="match status" value="1"/>
</dbReference>
<dbReference type="PANTHER" id="PTHR23100:SF0">
    <property type="entry name" value="ARGININE BIOSYNTHESIS BIFUNCTIONAL PROTEIN ARGJ, MITOCHONDRIAL"/>
    <property type="match status" value="1"/>
</dbReference>
<dbReference type="Pfam" id="PF01960">
    <property type="entry name" value="ArgJ"/>
    <property type="match status" value="1"/>
</dbReference>
<dbReference type="SUPFAM" id="SSF56266">
    <property type="entry name" value="DmpA/ArgJ-like"/>
    <property type="match status" value="1"/>
</dbReference>
<comment type="function">
    <text evidence="1">Catalyzes two activities which are involved in the cyclic version of arginine biosynthesis: the synthesis of N-acetylglutamate from glutamate and acetyl-CoA as the acetyl donor, and of ornithine by transacetylation between N(2)-acetylornithine and glutamate.</text>
</comment>
<comment type="catalytic activity">
    <reaction evidence="1">
        <text>N(2)-acetyl-L-ornithine + L-glutamate = N-acetyl-L-glutamate + L-ornithine</text>
        <dbReference type="Rhea" id="RHEA:15349"/>
        <dbReference type="ChEBI" id="CHEBI:29985"/>
        <dbReference type="ChEBI" id="CHEBI:44337"/>
        <dbReference type="ChEBI" id="CHEBI:46911"/>
        <dbReference type="ChEBI" id="CHEBI:57805"/>
        <dbReference type="EC" id="2.3.1.35"/>
    </reaction>
</comment>
<comment type="catalytic activity">
    <reaction evidence="1">
        <text>L-glutamate + acetyl-CoA = N-acetyl-L-glutamate + CoA + H(+)</text>
        <dbReference type="Rhea" id="RHEA:24292"/>
        <dbReference type="ChEBI" id="CHEBI:15378"/>
        <dbReference type="ChEBI" id="CHEBI:29985"/>
        <dbReference type="ChEBI" id="CHEBI:44337"/>
        <dbReference type="ChEBI" id="CHEBI:57287"/>
        <dbReference type="ChEBI" id="CHEBI:57288"/>
        <dbReference type="EC" id="2.3.1.1"/>
    </reaction>
</comment>
<comment type="pathway">
    <text evidence="1">Amino-acid biosynthesis; L-arginine biosynthesis; L-ornithine and N-acetyl-L-glutamate from L-glutamate and N(2)-acetyl-L-ornithine (cyclic): step 1/1.</text>
</comment>
<comment type="pathway">
    <text evidence="1">Amino-acid biosynthesis; L-arginine biosynthesis; N(2)-acetyl-L-ornithine from L-glutamate: step 1/4.</text>
</comment>
<comment type="subunit">
    <text evidence="1">Heterotetramer of two alpha and two beta chains.</text>
</comment>
<comment type="subcellular location">
    <subcellularLocation>
        <location evidence="1">Cytoplasm</location>
    </subcellularLocation>
</comment>
<comment type="similarity">
    <text evidence="1">Belongs to the ArgJ family.</text>
</comment>
<reference key="1">
    <citation type="journal article" date="2000" name="Nature">
        <title>Complete genome sequence of Pseudomonas aeruginosa PAO1, an opportunistic pathogen.</title>
        <authorList>
            <person name="Stover C.K."/>
            <person name="Pham X.-Q.T."/>
            <person name="Erwin A.L."/>
            <person name="Mizoguchi S.D."/>
            <person name="Warrener P."/>
            <person name="Hickey M.J."/>
            <person name="Brinkman F.S.L."/>
            <person name="Hufnagle W.O."/>
            <person name="Kowalik D.J."/>
            <person name="Lagrou M."/>
            <person name="Garber R.L."/>
            <person name="Goltry L."/>
            <person name="Tolentino E."/>
            <person name="Westbrock-Wadman S."/>
            <person name="Yuan Y."/>
            <person name="Brody L.L."/>
            <person name="Coulter S.N."/>
            <person name="Folger K.R."/>
            <person name="Kas A."/>
            <person name="Larbig K."/>
            <person name="Lim R.M."/>
            <person name="Smith K.A."/>
            <person name="Spencer D.H."/>
            <person name="Wong G.K.-S."/>
            <person name="Wu Z."/>
            <person name="Paulsen I.T."/>
            <person name="Reizer J."/>
            <person name="Saier M.H. Jr."/>
            <person name="Hancock R.E.W."/>
            <person name="Lory S."/>
            <person name="Olson M.V."/>
        </authorList>
    </citation>
    <scope>NUCLEOTIDE SEQUENCE [LARGE SCALE GENOMIC DNA]</scope>
    <source>
        <strain>ATCC 15692 / DSM 22644 / CIP 104116 / JCM 14847 / LMG 12228 / 1C / PRS 101 / PAO1</strain>
    </source>
</reference>
<gene>
    <name evidence="1" type="primary">argJ</name>
    <name type="ordered locus">PA4402</name>
</gene>
<sequence>MAVGLGPLSTLHPVPGFELGIASAGIKRPGRKDVVVMRCAEGSSVAGVFTLNAFCAAPVTLAKQRFLGEVRYLLTNTGNANAGTGEAGLAAAAQTCAKLAELAGVAETSVLPYSTGVIGEPLPVAKIEAALPAALADLAEDRWAEAAAGIMTTDTLPKGASRQFVHDGVTVTVTGISKGAGMIKPNMATMLGYIATDAKVAQGVLQDLLRDAANKSFNRITIDGDTSTNDCCMLIATGRAALPEVTQASGALFAALKQAVLEVSMELAQAIVRDGEGATKFVTVQVNGGATHQECLDVGYAVAHSPLIKTALFASDPNWGRILAAVGRAGVANLDVSKIDVFLGDVCIASRGGRAASYTEEQGAAVMAQAEIGIRIELGRGTCSETIWTTDLSHEYVKINAEYRT</sequence>
<protein>
    <recommendedName>
        <fullName evidence="1">Arginine biosynthesis bifunctional protein ArgJ</fullName>
    </recommendedName>
    <domain>
        <recommendedName>
            <fullName evidence="1">Glutamate N-acetyltransferase</fullName>
            <ecNumber evidence="1">2.3.1.35</ecNumber>
        </recommendedName>
        <alternativeName>
            <fullName evidence="1">Ornithine acetyltransferase</fullName>
            <shortName evidence="1">OATase</shortName>
        </alternativeName>
        <alternativeName>
            <fullName evidence="1">Ornithine transacetylase</fullName>
        </alternativeName>
    </domain>
    <domain>
        <recommendedName>
            <fullName evidence="1">Amino-acid acetyltransferase</fullName>
            <ecNumber evidence="1">2.3.1.1</ecNumber>
        </recommendedName>
        <alternativeName>
            <fullName evidence="1">N-acetylglutamate synthase</fullName>
            <shortName evidence="1">AGSase</shortName>
        </alternativeName>
    </domain>
    <component>
        <recommendedName>
            <fullName evidence="1">Arginine biosynthesis bifunctional protein ArgJ alpha chain</fullName>
        </recommendedName>
    </component>
    <component>
        <recommendedName>
            <fullName evidence="1">Arginine biosynthesis bifunctional protein ArgJ beta chain</fullName>
        </recommendedName>
    </component>
</protein>
<keyword id="KW-0012">Acyltransferase</keyword>
<keyword id="KW-0028">Amino-acid biosynthesis</keyword>
<keyword id="KW-0055">Arginine biosynthesis</keyword>
<keyword id="KW-0068">Autocatalytic cleavage</keyword>
<keyword id="KW-0963">Cytoplasm</keyword>
<keyword id="KW-0511">Multifunctional enzyme</keyword>
<keyword id="KW-1185">Reference proteome</keyword>
<keyword id="KW-0808">Transferase</keyword>
<name>ARGJ_PSEAE</name>